<reference key="1">
    <citation type="journal article" date="2006" name="Proc. Natl. Acad. Sci. U.S.A.">
        <title>Identification of genes subject to positive selection in uropathogenic strains of Escherichia coli: a comparative genomics approach.</title>
        <authorList>
            <person name="Chen S.L."/>
            <person name="Hung C.-S."/>
            <person name="Xu J."/>
            <person name="Reigstad C.S."/>
            <person name="Magrini V."/>
            <person name="Sabo A."/>
            <person name="Blasiar D."/>
            <person name="Bieri T."/>
            <person name="Meyer R.R."/>
            <person name="Ozersky P."/>
            <person name="Armstrong J.R."/>
            <person name="Fulton R.S."/>
            <person name="Latreille J.P."/>
            <person name="Spieth J."/>
            <person name="Hooton T.M."/>
            <person name="Mardis E.R."/>
            <person name="Hultgren S.J."/>
            <person name="Gordon J.I."/>
        </authorList>
    </citation>
    <scope>NUCLEOTIDE SEQUENCE [LARGE SCALE GENOMIC DNA]</scope>
    <source>
        <strain>UTI89 / UPEC</strain>
    </source>
</reference>
<name>ARGP_ECOUT</name>
<protein>
    <recommendedName>
        <fullName evidence="1">HTH-type transcriptional regulator ArgP</fullName>
    </recommendedName>
</protein>
<organism>
    <name type="scientific">Escherichia coli (strain UTI89 / UPEC)</name>
    <dbReference type="NCBI Taxonomy" id="364106"/>
    <lineage>
        <taxon>Bacteria</taxon>
        <taxon>Pseudomonadati</taxon>
        <taxon>Pseudomonadota</taxon>
        <taxon>Gammaproteobacteria</taxon>
        <taxon>Enterobacterales</taxon>
        <taxon>Enterobacteriaceae</taxon>
        <taxon>Escherichia</taxon>
    </lineage>
</organism>
<sequence length="297" mass="33472">MKRPDYRTLQALDAVIRERGFERAAQKLCITQSAVSQRIKQLENMFGQPLLVRTVPPRPTEQGQKLLALLRQVELLEEEWLGDEQTGSTPLLLSLAVNADSLATWLLPALAPVLADSPIRLNLQVEDETRTQERLRRGEVVGAVSIQHQALPSCLVDKLGALDYLFVSSKPFAEKYFPNGVTRSALLKAPVVAFDHLDDMHQAFLQQNFDLPPGSVPCHIVNSSEAFVQLARQGTTCCMIPHLQIEKELASGELIDLTPGLFQRRMLYWHRFAPESRMMRKVTDALLDYGHKVLRQD</sequence>
<feature type="chain" id="PRO_0000258606" description="HTH-type transcriptional regulator ArgP">
    <location>
        <begin position="1"/>
        <end position="297"/>
    </location>
</feature>
<feature type="domain" description="HTH lysR-type" evidence="1">
    <location>
        <begin position="4"/>
        <end position="60"/>
    </location>
</feature>
<feature type="DNA-binding region" description="H-T-H motif" evidence="1">
    <location>
        <begin position="21"/>
        <end position="40"/>
    </location>
</feature>
<comment type="function">
    <text evidence="1">Controls the transcription of genes involved in arginine and lysine metabolism.</text>
</comment>
<comment type="subunit">
    <text evidence="1">Homodimer.</text>
</comment>
<comment type="similarity">
    <text evidence="2">Belongs to the LysR transcriptional regulatory family.</text>
</comment>
<comment type="sequence caution" evidence="2">
    <conflict type="erroneous initiation">
        <sequence resource="EMBL-CDS" id="ABE08750"/>
    </conflict>
</comment>
<dbReference type="EMBL" id="CP000243">
    <property type="protein sequence ID" value="ABE08750.1"/>
    <property type="status" value="ALT_INIT"/>
    <property type="molecule type" value="Genomic_DNA"/>
</dbReference>
<dbReference type="RefSeq" id="WP_000828351.1">
    <property type="nucleotide sequence ID" value="NZ_CP064825.1"/>
</dbReference>
<dbReference type="SMR" id="Q1R7B4"/>
<dbReference type="GeneID" id="93779084"/>
<dbReference type="KEGG" id="eci:UTI89_C3302"/>
<dbReference type="HOGENOM" id="CLU_063829_0_0_6"/>
<dbReference type="Proteomes" id="UP000001952">
    <property type="component" value="Chromosome"/>
</dbReference>
<dbReference type="GO" id="GO:0003677">
    <property type="term" value="F:DNA binding"/>
    <property type="evidence" value="ECO:0007669"/>
    <property type="project" value="UniProtKB-UniRule"/>
</dbReference>
<dbReference type="GO" id="GO:0003700">
    <property type="term" value="F:DNA-binding transcription factor activity"/>
    <property type="evidence" value="ECO:0007669"/>
    <property type="project" value="UniProtKB-UniRule"/>
</dbReference>
<dbReference type="CDD" id="cd08428">
    <property type="entry name" value="PBP2_IciA_ArgP"/>
    <property type="match status" value="1"/>
</dbReference>
<dbReference type="FunFam" id="1.10.10.10:FF:000061">
    <property type="entry name" value="HTH-type transcriptional regulator ArgP"/>
    <property type="match status" value="1"/>
</dbReference>
<dbReference type="FunFam" id="3.40.190.290:FF:000002">
    <property type="entry name" value="HTH-type transcriptional regulator ArgP"/>
    <property type="match status" value="1"/>
</dbReference>
<dbReference type="Gene3D" id="3.40.190.290">
    <property type="match status" value="1"/>
</dbReference>
<dbReference type="Gene3D" id="1.10.10.10">
    <property type="entry name" value="Winged helix-like DNA-binding domain superfamily/Winged helix DNA-binding domain"/>
    <property type="match status" value="1"/>
</dbReference>
<dbReference type="HAMAP" id="MF_00513">
    <property type="entry name" value="HTH_type_ArgP"/>
    <property type="match status" value="1"/>
</dbReference>
<dbReference type="InterPro" id="IPR017685">
    <property type="entry name" value="ArgP"/>
</dbReference>
<dbReference type="InterPro" id="IPR023490">
    <property type="entry name" value="ArgP_gammaproteobact"/>
</dbReference>
<dbReference type="InterPro" id="IPR050176">
    <property type="entry name" value="LTTR"/>
</dbReference>
<dbReference type="InterPro" id="IPR005119">
    <property type="entry name" value="LysR_subst-bd"/>
</dbReference>
<dbReference type="InterPro" id="IPR000847">
    <property type="entry name" value="Tscrpt_reg_HTH_LysR"/>
</dbReference>
<dbReference type="InterPro" id="IPR036388">
    <property type="entry name" value="WH-like_DNA-bd_sf"/>
</dbReference>
<dbReference type="InterPro" id="IPR036390">
    <property type="entry name" value="WH_DNA-bd_sf"/>
</dbReference>
<dbReference type="NCBIfam" id="TIGR03298">
    <property type="entry name" value="argP"/>
    <property type="match status" value="1"/>
</dbReference>
<dbReference type="NCBIfam" id="NF002964">
    <property type="entry name" value="PRK03635.1"/>
    <property type="match status" value="1"/>
</dbReference>
<dbReference type="NCBIfam" id="NF009888">
    <property type="entry name" value="PRK13348.1"/>
    <property type="match status" value="1"/>
</dbReference>
<dbReference type="PANTHER" id="PTHR30579:SF2">
    <property type="entry name" value="HTH-TYPE TRANSCRIPTIONAL REGULATOR ARGP"/>
    <property type="match status" value="1"/>
</dbReference>
<dbReference type="PANTHER" id="PTHR30579">
    <property type="entry name" value="TRANSCRIPTIONAL REGULATOR"/>
    <property type="match status" value="1"/>
</dbReference>
<dbReference type="Pfam" id="PF00126">
    <property type="entry name" value="HTH_1"/>
    <property type="match status" value="1"/>
</dbReference>
<dbReference type="Pfam" id="PF03466">
    <property type="entry name" value="LysR_substrate"/>
    <property type="match status" value="1"/>
</dbReference>
<dbReference type="PRINTS" id="PR00039">
    <property type="entry name" value="HTHLYSR"/>
</dbReference>
<dbReference type="SUPFAM" id="SSF53850">
    <property type="entry name" value="Periplasmic binding protein-like II"/>
    <property type="match status" value="1"/>
</dbReference>
<dbReference type="SUPFAM" id="SSF46785">
    <property type="entry name" value="Winged helix' DNA-binding domain"/>
    <property type="match status" value="1"/>
</dbReference>
<dbReference type="PROSITE" id="PS50931">
    <property type="entry name" value="HTH_LYSR"/>
    <property type="match status" value="1"/>
</dbReference>
<proteinExistence type="inferred from homology"/>
<accession>Q1R7B4</accession>
<evidence type="ECO:0000255" key="1">
    <source>
        <dbReference type="HAMAP-Rule" id="MF_00513"/>
    </source>
</evidence>
<evidence type="ECO:0000305" key="2"/>
<keyword id="KW-0238">DNA-binding</keyword>
<keyword id="KW-0804">Transcription</keyword>
<keyword id="KW-0805">Transcription regulation</keyword>
<gene>
    <name evidence="1" type="primary">argP</name>
    <name type="synonym">iciA</name>
    <name type="ordered locus">UTI89_C3302</name>
</gene>